<proteinExistence type="inferred from homology"/>
<accession>B4EU60</accession>
<protein>
    <recommendedName>
        <fullName evidence="1">7-cyano-7-deazaguanine synthase</fullName>
        <ecNumber evidence="1">6.3.4.20</ecNumber>
    </recommendedName>
    <alternativeName>
        <fullName evidence="1">7-cyano-7-carbaguanine synthase</fullName>
    </alternativeName>
    <alternativeName>
        <fullName evidence="1">PreQ(0) synthase</fullName>
    </alternativeName>
    <alternativeName>
        <fullName evidence="1">Queuosine biosynthesis protein QueC</fullName>
    </alternativeName>
</protein>
<name>QUEC_PROMH</name>
<keyword id="KW-0067">ATP-binding</keyword>
<keyword id="KW-0436">Ligase</keyword>
<keyword id="KW-0479">Metal-binding</keyword>
<keyword id="KW-0547">Nucleotide-binding</keyword>
<keyword id="KW-0671">Queuosine biosynthesis</keyword>
<keyword id="KW-1185">Reference proteome</keyword>
<keyword id="KW-0862">Zinc</keyword>
<evidence type="ECO:0000255" key="1">
    <source>
        <dbReference type="HAMAP-Rule" id="MF_01633"/>
    </source>
</evidence>
<dbReference type="EC" id="6.3.4.20" evidence="1"/>
<dbReference type="EMBL" id="AM942759">
    <property type="protein sequence ID" value="CAR40410.1"/>
    <property type="molecule type" value="Genomic_DNA"/>
</dbReference>
<dbReference type="RefSeq" id="WP_004245081.1">
    <property type="nucleotide sequence ID" value="NC_010554.1"/>
</dbReference>
<dbReference type="SMR" id="B4EU60"/>
<dbReference type="EnsemblBacteria" id="CAR40410">
    <property type="protein sequence ID" value="CAR40410"/>
    <property type="gene ID" value="PMI0122"/>
</dbReference>
<dbReference type="GeneID" id="6801229"/>
<dbReference type="KEGG" id="pmr:PMI0122"/>
<dbReference type="eggNOG" id="COG0603">
    <property type="taxonomic scope" value="Bacteria"/>
</dbReference>
<dbReference type="HOGENOM" id="CLU_081854_0_0_6"/>
<dbReference type="UniPathway" id="UPA00391"/>
<dbReference type="Proteomes" id="UP000008319">
    <property type="component" value="Chromosome"/>
</dbReference>
<dbReference type="GO" id="GO:0005524">
    <property type="term" value="F:ATP binding"/>
    <property type="evidence" value="ECO:0007669"/>
    <property type="project" value="UniProtKB-UniRule"/>
</dbReference>
<dbReference type="GO" id="GO:0016879">
    <property type="term" value="F:ligase activity, forming carbon-nitrogen bonds"/>
    <property type="evidence" value="ECO:0007669"/>
    <property type="project" value="UniProtKB-UniRule"/>
</dbReference>
<dbReference type="GO" id="GO:0008270">
    <property type="term" value="F:zinc ion binding"/>
    <property type="evidence" value="ECO:0007669"/>
    <property type="project" value="UniProtKB-UniRule"/>
</dbReference>
<dbReference type="GO" id="GO:0008616">
    <property type="term" value="P:queuosine biosynthetic process"/>
    <property type="evidence" value="ECO:0007669"/>
    <property type="project" value="UniProtKB-UniRule"/>
</dbReference>
<dbReference type="CDD" id="cd01995">
    <property type="entry name" value="QueC-like"/>
    <property type="match status" value="1"/>
</dbReference>
<dbReference type="FunFam" id="3.40.50.620:FF:000017">
    <property type="entry name" value="7-cyano-7-deazaguanine synthase"/>
    <property type="match status" value="1"/>
</dbReference>
<dbReference type="Gene3D" id="3.40.50.620">
    <property type="entry name" value="HUPs"/>
    <property type="match status" value="1"/>
</dbReference>
<dbReference type="HAMAP" id="MF_01633">
    <property type="entry name" value="QueC"/>
    <property type="match status" value="1"/>
</dbReference>
<dbReference type="InterPro" id="IPR018317">
    <property type="entry name" value="QueC"/>
</dbReference>
<dbReference type="InterPro" id="IPR014729">
    <property type="entry name" value="Rossmann-like_a/b/a_fold"/>
</dbReference>
<dbReference type="NCBIfam" id="TIGR00364">
    <property type="entry name" value="7-cyano-7-deazaguanine synthase QueC"/>
    <property type="match status" value="1"/>
</dbReference>
<dbReference type="NCBIfam" id="NF008317">
    <property type="entry name" value="PRK11106.1"/>
    <property type="match status" value="1"/>
</dbReference>
<dbReference type="PANTHER" id="PTHR42914">
    <property type="entry name" value="7-CYANO-7-DEAZAGUANINE SYNTHASE"/>
    <property type="match status" value="1"/>
</dbReference>
<dbReference type="PANTHER" id="PTHR42914:SF1">
    <property type="entry name" value="7-CYANO-7-DEAZAGUANINE SYNTHASE"/>
    <property type="match status" value="1"/>
</dbReference>
<dbReference type="Pfam" id="PF06508">
    <property type="entry name" value="QueC"/>
    <property type="match status" value="1"/>
</dbReference>
<dbReference type="PIRSF" id="PIRSF006293">
    <property type="entry name" value="ExsB"/>
    <property type="match status" value="1"/>
</dbReference>
<dbReference type="SUPFAM" id="SSF52402">
    <property type="entry name" value="Adenine nucleotide alpha hydrolases-like"/>
    <property type="match status" value="1"/>
</dbReference>
<sequence>MKKTVVVFSGGQDSTTCLIQALEQYDEVHCITFNYGQRHKEEIEVAQRVSQLLGATAHKVLDVSLLNELAISSLTRDNIPVPDFKQSEQSDIPSTFVPGRNILFLTLAAIYAYQIGAESVITGVCETDFSGYPDCRDEFVKALNHAVNLGIARDIQFITPLMWLDKAQTWALADYYGKLDFVRHNTLTCYNGIQGDGCGQCAACHLRERGLHGYLQDKNAVMDAMKNKVGLK</sequence>
<organism>
    <name type="scientific">Proteus mirabilis (strain HI4320)</name>
    <dbReference type="NCBI Taxonomy" id="529507"/>
    <lineage>
        <taxon>Bacteria</taxon>
        <taxon>Pseudomonadati</taxon>
        <taxon>Pseudomonadota</taxon>
        <taxon>Gammaproteobacteria</taxon>
        <taxon>Enterobacterales</taxon>
        <taxon>Morganellaceae</taxon>
        <taxon>Proteus</taxon>
    </lineage>
</organism>
<feature type="chain" id="PRO_1000186620" description="7-cyano-7-deazaguanine synthase">
    <location>
        <begin position="1"/>
        <end position="232"/>
    </location>
</feature>
<feature type="binding site" evidence="1">
    <location>
        <begin position="8"/>
        <end position="18"/>
    </location>
    <ligand>
        <name>ATP</name>
        <dbReference type="ChEBI" id="CHEBI:30616"/>
    </ligand>
</feature>
<feature type="binding site" evidence="1">
    <location>
        <position position="189"/>
    </location>
    <ligand>
        <name>Zn(2+)</name>
        <dbReference type="ChEBI" id="CHEBI:29105"/>
    </ligand>
</feature>
<feature type="binding site" evidence="1">
    <location>
        <position position="198"/>
    </location>
    <ligand>
        <name>Zn(2+)</name>
        <dbReference type="ChEBI" id="CHEBI:29105"/>
    </ligand>
</feature>
<feature type="binding site" evidence="1">
    <location>
        <position position="201"/>
    </location>
    <ligand>
        <name>Zn(2+)</name>
        <dbReference type="ChEBI" id="CHEBI:29105"/>
    </ligand>
</feature>
<feature type="binding site" evidence="1">
    <location>
        <position position="204"/>
    </location>
    <ligand>
        <name>Zn(2+)</name>
        <dbReference type="ChEBI" id="CHEBI:29105"/>
    </ligand>
</feature>
<reference key="1">
    <citation type="journal article" date="2008" name="J. Bacteriol.">
        <title>Complete genome sequence of uropathogenic Proteus mirabilis, a master of both adherence and motility.</title>
        <authorList>
            <person name="Pearson M.M."/>
            <person name="Sebaihia M."/>
            <person name="Churcher C."/>
            <person name="Quail M.A."/>
            <person name="Seshasayee A.S."/>
            <person name="Luscombe N.M."/>
            <person name="Abdellah Z."/>
            <person name="Arrosmith C."/>
            <person name="Atkin B."/>
            <person name="Chillingworth T."/>
            <person name="Hauser H."/>
            <person name="Jagels K."/>
            <person name="Moule S."/>
            <person name="Mungall K."/>
            <person name="Norbertczak H."/>
            <person name="Rabbinowitsch E."/>
            <person name="Walker D."/>
            <person name="Whithead S."/>
            <person name="Thomson N.R."/>
            <person name="Rather P.N."/>
            <person name="Parkhill J."/>
            <person name="Mobley H.L.T."/>
        </authorList>
    </citation>
    <scope>NUCLEOTIDE SEQUENCE [LARGE SCALE GENOMIC DNA]</scope>
    <source>
        <strain>HI4320</strain>
    </source>
</reference>
<gene>
    <name evidence="1" type="primary">queC</name>
    <name type="ordered locus">PMI0122</name>
</gene>
<comment type="function">
    <text evidence="1">Catalyzes the ATP-dependent conversion of 7-carboxy-7-deazaguanine (CDG) to 7-cyano-7-deazaguanine (preQ(0)).</text>
</comment>
<comment type="catalytic activity">
    <reaction evidence="1">
        <text>7-carboxy-7-deazaguanine + NH4(+) + ATP = 7-cyano-7-deazaguanine + ADP + phosphate + H2O + H(+)</text>
        <dbReference type="Rhea" id="RHEA:27982"/>
        <dbReference type="ChEBI" id="CHEBI:15377"/>
        <dbReference type="ChEBI" id="CHEBI:15378"/>
        <dbReference type="ChEBI" id="CHEBI:28938"/>
        <dbReference type="ChEBI" id="CHEBI:30616"/>
        <dbReference type="ChEBI" id="CHEBI:43474"/>
        <dbReference type="ChEBI" id="CHEBI:45075"/>
        <dbReference type="ChEBI" id="CHEBI:61036"/>
        <dbReference type="ChEBI" id="CHEBI:456216"/>
        <dbReference type="EC" id="6.3.4.20"/>
    </reaction>
</comment>
<comment type="cofactor">
    <cofactor evidence="1">
        <name>Zn(2+)</name>
        <dbReference type="ChEBI" id="CHEBI:29105"/>
    </cofactor>
    <text evidence="1">Binds 1 zinc ion per subunit.</text>
</comment>
<comment type="pathway">
    <text evidence="1">Purine metabolism; 7-cyano-7-deazaguanine biosynthesis.</text>
</comment>
<comment type="similarity">
    <text evidence="1">Belongs to the QueC family.</text>
</comment>